<reference key="1">
    <citation type="journal article" date="2007" name="PLoS ONE">
        <title>A glimpse of streptococcal toxic shock syndrome from comparative genomics of S. suis 2 Chinese isolates.</title>
        <authorList>
            <person name="Chen C."/>
            <person name="Tang J."/>
            <person name="Dong W."/>
            <person name="Wang C."/>
            <person name="Feng Y."/>
            <person name="Wang J."/>
            <person name="Zheng F."/>
            <person name="Pan X."/>
            <person name="Liu D."/>
            <person name="Li M."/>
            <person name="Song Y."/>
            <person name="Zhu X."/>
            <person name="Sun H."/>
            <person name="Feng T."/>
            <person name="Guo Z."/>
            <person name="Ju A."/>
            <person name="Ge J."/>
            <person name="Dong Y."/>
            <person name="Sun W."/>
            <person name="Jiang Y."/>
            <person name="Wang J."/>
            <person name="Yan J."/>
            <person name="Yang H."/>
            <person name="Wang X."/>
            <person name="Gao G.F."/>
            <person name="Yang R."/>
            <person name="Wang J."/>
            <person name="Yu J."/>
        </authorList>
    </citation>
    <scope>NUCLEOTIDE SEQUENCE [LARGE SCALE GENOMIC DNA]</scope>
    <source>
        <strain>05ZYH33</strain>
    </source>
</reference>
<name>RL5_STRSY</name>
<protein>
    <recommendedName>
        <fullName evidence="1">Large ribosomal subunit protein uL5</fullName>
    </recommendedName>
    <alternativeName>
        <fullName evidence="2">50S ribosomal protein L5</fullName>
    </alternativeName>
</protein>
<gene>
    <name evidence="1" type="primary">rplE</name>
    <name type="ordered locus">SSU05_0083</name>
</gene>
<feature type="chain" id="PRO_1000052846" description="Large ribosomal subunit protein uL5">
    <location>
        <begin position="1"/>
        <end position="180"/>
    </location>
</feature>
<evidence type="ECO:0000255" key="1">
    <source>
        <dbReference type="HAMAP-Rule" id="MF_01333"/>
    </source>
</evidence>
<evidence type="ECO:0000305" key="2"/>
<comment type="function">
    <text evidence="1">This is one of the proteins that bind and probably mediate the attachment of the 5S RNA into the large ribosomal subunit, where it forms part of the central protuberance. In the 70S ribosome it contacts protein S13 of the 30S subunit (bridge B1b), connecting the 2 subunits; this bridge is implicated in subunit movement. Contacts the P site tRNA; the 5S rRNA and some of its associated proteins might help stabilize positioning of ribosome-bound tRNAs.</text>
</comment>
<comment type="subunit">
    <text evidence="1">Part of the 50S ribosomal subunit; part of the 5S rRNA/L5/L18/L25 subcomplex. Contacts the 5S rRNA and the P site tRNA. Forms a bridge to the 30S subunit in the 70S ribosome.</text>
</comment>
<comment type="similarity">
    <text evidence="1">Belongs to the universal ribosomal protein uL5 family.</text>
</comment>
<sequence>MANRLKEKYLNEVVPALTEQFNYSSVMAVPKVDKIVLNMGVGDAVSNAKNLEKAAQELALISGQKPLITKAKKSIAGFRLREGVAIGAKVTLRGERMYEFLDKLVTVSLPRVRDFHGVPTKSFDGRGNYTLGVKEQLIFPEINFDDVDKTRGMDIVIVTTANTDEESRALLTGLGMPFAK</sequence>
<keyword id="KW-0687">Ribonucleoprotein</keyword>
<keyword id="KW-0689">Ribosomal protein</keyword>
<keyword id="KW-0694">RNA-binding</keyword>
<keyword id="KW-0699">rRNA-binding</keyword>
<keyword id="KW-0820">tRNA-binding</keyword>
<dbReference type="EMBL" id="CP000407">
    <property type="protein sequence ID" value="ABP89055.1"/>
    <property type="molecule type" value="Genomic_DNA"/>
</dbReference>
<dbReference type="SMR" id="A4VSG6"/>
<dbReference type="STRING" id="391295.SSU05_0083"/>
<dbReference type="KEGG" id="ssu:SSU05_0083"/>
<dbReference type="eggNOG" id="COG0094">
    <property type="taxonomic scope" value="Bacteria"/>
</dbReference>
<dbReference type="HOGENOM" id="CLU_061015_2_1_9"/>
<dbReference type="GO" id="GO:1990904">
    <property type="term" value="C:ribonucleoprotein complex"/>
    <property type="evidence" value="ECO:0007669"/>
    <property type="project" value="UniProtKB-KW"/>
</dbReference>
<dbReference type="GO" id="GO:0005840">
    <property type="term" value="C:ribosome"/>
    <property type="evidence" value="ECO:0007669"/>
    <property type="project" value="UniProtKB-KW"/>
</dbReference>
<dbReference type="GO" id="GO:0019843">
    <property type="term" value="F:rRNA binding"/>
    <property type="evidence" value="ECO:0007669"/>
    <property type="project" value="UniProtKB-UniRule"/>
</dbReference>
<dbReference type="GO" id="GO:0003735">
    <property type="term" value="F:structural constituent of ribosome"/>
    <property type="evidence" value="ECO:0007669"/>
    <property type="project" value="InterPro"/>
</dbReference>
<dbReference type="GO" id="GO:0000049">
    <property type="term" value="F:tRNA binding"/>
    <property type="evidence" value="ECO:0007669"/>
    <property type="project" value="UniProtKB-UniRule"/>
</dbReference>
<dbReference type="GO" id="GO:0006412">
    <property type="term" value="P:translation"/>
    <property type="evidence" value="ECO:0007669"/>
    <property type="project" value="UniProtKB-UniRule"/>
</dbReference>
<dbReference type="FunFam" id="3.30.1440.10:FF:000001">
    <property type="entry name" value="50S ribosomal protein L5"/>
    <property type="match status" value="1"/>
</dbReference>
<dbReference type="Gene3D" id="3.30.1440.10">
    <property type="match status" value="1"/>
</dbReference>
<dbReference type="HAMAP" id="MF_01333_B">
    <property type="entry name" value="Ribosomal_uL5_B"/>
    <property type="match status" value="1"/>
</dbReference>
<dbReference type="InterPro" id="IPR002132">
    <property type="entry name" value="Ribosomal_uL5"/>
</dbReference>
<dbReference type="InterPro" id="IPR020930">
    <property type="entry name" value="Ribosomal_uL5_bac-type"/>
</dbReference>
<dbReference type="InterPro" id="IPR031309">
    <property type="entry name" value="Ribosomal_uL5_C"/>
</dbReference>
<dbReference type="InterPro" id="IPR020929">
    <property type="entry name" value="Ribosomal_uL5_CS"/>
</dbReference>
<dbReference type="InterPro" id="IPR022803">
    <property type="entry name" value="Ribosomal_uL5_dom_sf"/>
</dbReference>
<dbReference type="InterPro" id="IPR031310">
    <property type="entry name" value="Ribosomal_uL5_N"/>
</dbReference>
<dbReference type="NCBIfam" id="NF000585">
    <property type="entry name" value="PRK00010.1"/>
    <property type="match status" value="1"/>
</dbReference>
<dbReference type="PANTHER" id="PTHR11994">
    <property type="entry name" value="60S RIBOSOMAL PROTEIN L11-RELATED"/>
    <property type="match status" value="1"/>
</dbReference>
<dbReference type="Pfam" id="PF00281">
    <property type="entry name" value="Ribosomal_L5"/>
    <property type="match status" value="1"/>
</dbReference>
<dbReference type="Pfam" id="PF00673">
    <property type="entry name" value="Ribosomal_L5_C"/>
    <property type="match status" value="1"/>
</dbReference>
<dbReference type="PIRSF" id="PIRSF002161">
    <property type="entry name" value="Ribosomal_L5"/>
    <property type="match status" value="1"/>
</dbReference>
<dbReference type="SUPFAM" id="SSF55282">
    <property type="entry name" value="RL5-like"/>
    <property type="match status" value="1"/>
</dbReference>
<dbReference type="PROSITE" id="PS00358">
    <property type="entry name" value="RIBOSOMAL_L5"/>
    <property type="match status" value="1"/>
</dbReference>
<proteinExistence type="inferred from homology"/>
<organism>
    <name type="scientific">Streptococcus suis (strain 05ZYH33)</name>
    <dbReference type="NCBI Taxonomy" id="391295"/>
    <lineage>
        <taxon>Bacteria</taxon>
        <taxon>Bacillati</taxon>
        <taxon>Bacillota</taxon>
        <taxon>Bacilli</taxon>
        <taxon>Lactobacillales</taxon>
        <taxon>Streptococcaceae</taxon>
        <taxon>Streptococcus</taxon>
    </lineage>
</organism>
<accession>A4VSG6</accession>